<evidence type="ECO:0000250" key="1">
    <source>
        <dbReference type="UniProtKB" id="Q9UG01"/>
    </source>
</evidence>
<evidence type="ECO:0000269" key="2">
    <source>
    </source>
</evidence>
<evidence type="ECO:0000269" key="3">
    <source>
    </source>
</evidence>
<evidence type="ECO:0000269" key="4">
    <source>
    </source>
</evidence>
<evidence type="ECO:0000269" key="5">
    <source>
    </source>
</evidence>
<evidence type="ECO:0000269" key="6">
    <source>
    </source>
</evidence>
<evidence type="ECO:0000269" key="7">
    <source>
    </source>
</evidence>
<evidence type="ECO:0000303" key="8">
    <source>
    </source>
</evidence>
<evidence type="ECO:0000303" key="9">
    <source>
    </source>
</evidence>
<evidence type="ECO:0000305" key="10"/>
<evidence type="ECO:0007744" key="11">
    <source>
    </source>
</evidence>
<organism>
    <name type="scientific">Mus musculus</name>
    <name type="common">Mouse</name>
    <dbReference type="NCBI Taxonomy" id="10090"/>
    <lineage>
        <taxon>Eukaryota</taxon>
        <taxon>Metazoa</taxon>
        <taxon>Chordata</taxon>
        <taxon>Craniata</taxon>
        <taxon>Vertebrata</taxon>
        <taxon>Euteleostomi</taxon>
        <taxon>Mammalia</taxon>
        <taxon>Eutheria</taxon>
        <taxon>Euarchontoglires</taxon>
        <taxon>Glires</taxon>
        <taxon>Rodentia</taxon>
        <taxon>Myomorpha</taxon>
        <taxon>Muroidea</taxon>
        <taxon>Muridae</taxon>
        <taxon>Murinae</taxon>
        <taxon>Mus</taxon>
        <taxon>Mus</taxon>
    </lineage>
</organism>
<keyword id="KW-0007">Acetylation</keyword>
<keyword id="KW-0025">Alternative splicing</keyword>
<keyword id="KW-0966">Cell projection</keyword>
<keyword id="KW-0969">Cilium</keyword>
<keyword id="KW-0217">Developmental protein</keyword>
<keyword id="KW-1017">Isopeptide bond</keyword>
<keyword id="KW-0488">Methylation</keyword>
<keyword id="KW-1185">Reference proteome</keyword>
<keyword id="KW-0677">Repeat</keyword>
<keyword id="KW-0802">TPR repeat</keyword>
<keyword id="KW-0832">Ubl conjugation</keyword>
<keyword id="KW-0853">WD repeat</keyword>
<sequence>MQLKHLRTLLSPQDGAAKVTCMAWSQNNAKFAVCTVDRVVLLYDEHGERRDKFSTKPADMKYGRKSYMVKGMAFSPDSTKIAIGQTDNIIYVYKIGEDWGDKKVICNKFIQTSAVTCLQWPAEYVIVFGLAEGKVRLANTKTNKSSTIYGTESYVVALTTNCSGKGILSGHADGTIVRYFFDDEGSGESQGKLVNHPCPPYALAWATNSIVAAGCDRRIVAYGKEGHVLQTFDYSRDPQEREFTTAAASPGGQSVVLGSYDRLRVFNWSPRRSIWEEAKPKEIANLYTVTALAWKRDGSRLCAGTLCGGVEQFDCCLRRSIYKNKFELTYVGPSQVIVKNLSSGTRVVLKSHYGYEVEEVKILGKERYLVAHTSDTLLLGDLNTNRLSEIAWQGSGGNEKYFFENENVCMIFNAGELTLVEYGSNDSLGSVRTEFMNPHLISVRINERCQRGMEDNKKLAYLVDIKTIAIVDLIGGYNIGTISHESRVDWLELNETGHKLLFRDRKLRLHLYDIESCSKTMILNFCSYVQWVPGSDVLVAQNRNSLCVWYNIEAPERVTMSSIRGDVVGLERGGGKTEVMVTEGVTTVAYTLDEGLIEFGTAIDDGNYTRATAFLETLEMTPETEAMWKTLSKLALEARQLHTAERCFSALGHVAKARFLHETNEIADQVSREYGGEGTDFYQVRARLAMLEKNYKLAEMIFLEQNAVEEAMDMYQELHRWEECIAVAEAKGHPALEKLRRDYYQWLMDTQQEERAGELQESQGDGLAAISLYLKAGLPAKAARLVLTREELLANTELVEHITTALIKGELYERAGDLFEKIRNPQRALECYCKGNAFMKAVELARLAFPVEVVRLEEAWGDHLVQQKQLDAAINHYIEARCSIKAIEAALGARQWKKAIYILDLQDRNTASKYYPRVAQHYASLQEYEIAEELYTKGDRTKDAIDMYTQAGRWEQAHKLAMKCMRPEDVSVLYITQAQEMEKQGKYREAERLYVTVEEPDLAITMFKKHKLYDDMIRLVGKHHPDLLSDTHLHLGKELEAEGRLQEAEYHYLEAQEWKATVNMYRSSGLWEEAYRVAKAHGGANAHKHVAYLWAKSLGGEAAVRLLNKLGLLEATIDHAADNCSFEFAFELSRLAFKHKAPEIHLKYAMYLEDEGKFEEAEAEFIRAGKPKEAVLMFVHNQDWEAAQRVAEAHDPDSVAEVLVGQARGALEEKDFQKAEGLLLRAQRPGLALNYYKEAGLWSDALRICKDYVPGQLEALQEEYEREATKKGGRGVEGLVEQARQWEQAGEYSRAVDCYLKVRDSGSSGLMEKCWMKAAELSIKFLPPQRSLEVVRVVGPQLIGIGKHSAAAELYLNLDLVKEAIDAFIEGEEWNKAKRVAKELDPRYEDYVDQHYKEFLKNQGKVDSLVGVDVVAALDLYVEQGQWDKCIETATKQNYKILHKYVALYATHLIREGGYAQALALYVQHGAPANPQNFNIYKRIFTDMVSSPGTNNAEAYHSWADLRDVLFNLCENLVKSSEANSAAHEEFEMMLLISHYYATRSAAQSIKQLETVAARLSVSLLRHTQLLPADKAFYEAGTAAKEVGWENMAFIFLNRFLDLTDAIEEGTLDALDHSDFQDTDIPFEVPLPAKQHVPEAQREEVRDWVLTVSMDQRLEQVLPRDERGVYEASLVAASTGVRALPCLITGYPILRNKIEFKRPGKAANKDNWNKFLMAIKTSHSPVCQDVLKFISQWCGGLPSTSFSFQ</sequence>
<accession>Q6VH22</accession>
<accession>Q6NZK1</accession>
<accession>Q80TI4</accession>
<accession>Q80W19</accession>
<accession>Q9DAB0</accession>
<gene>
    <name type="primary">Ift172</name>
    <name type="synonym">Kiaa1179</name>
    <name type="synonym">Wim</name>
</gene>
<feature type="chain" id="PRO_0000328942" description="Intraflagellar transport protein 172 homolog">
    <location>
        <begin position="1"/>
        <end position="1749"/>
    </location>
</feature>
<feature type="repeat" description="WD 1">
    <location>
        <begin position="14"/>
        <end position="53"/>
    </location>
</feature>
<feature type="repeat" description="WD 2">
    <location>
        <begin position="64"/>
        <end position="103"/>
    </location>
</feature>
<feature type="repeat" description="WD 3">
    <location>
        <begin position="110"/>
        <end position="148"/>
    </location>
</feature>
<feature type="repeat" description="WD 4">
    <location>
        <begin position="150"/>
        <end position="191"/>
    </location>
</feature>
<feature type="repeat" description="WD 5">
    <location>
        <begin position="195"/>
        <end position="233"/>
    </location>
</feature>
<feature type="repeat" description="WD 6">
    <location>
        <begin position="238"/>
        <end position="278"/>
    </location>
</feature>
<feature type="repeat" description="WD 7">
    <location>
        <begin position="284"/>
        <end position="323"/>
    </location>
</feature>
<feature type="repeat" description="WD 8">
    <location>
        <begin position="483"/>
        <end position="520"/>
    </location>
</feature>
<feature type="repeat" description="WD 9">
    <location>
        <begin position="521"/>
        <end position="559"/>
    </location>
</feature>
<feature type="repeat" description="TPR 1">
    <location>
        <begin position="593"/>
        <end position="624"/>
    </location>
</feature>
<feature type="repeat" description="TPR 2">
    <location>
        <begin position="692"/>
        <end position="725"/>
    </location>
</feature>
<feature type="repeat" description="TPR 3">
    <location>
        <begin position="809"/>
        <end position="842"/>
    </location>
</feature>
<feature type="repeat" description="TPR 4">
    <location>
        <begin position="854"/>
        <end position="887"/>
    </location>
</feature>
<feature type="repeat" description="TPR 5">
    <location>
        <begin position="912"/>
        <end position="945"/>
    </location>
</feature>
<feature type="repeat" description="TPR 6">
    <location>
        <begin position="947"/>
        <end position="970"/>
    </location>
</feature>
<feature type="repeat" description="TPR 7">
    <location>
        <begin position="971"/>
        <end position="1004"/>
    </location>
</feature>
<feature type="repeat" description="TPR 8">
    <location>
        <begin position="1042"/>
        <end position="1075"/>
    </location>
</feature>
<feature type="repeat" description="TPR 9">
    <location>
        <begin position="1142"/>
        <end position="1175"/>
    </location>
</feature>
<feature type="repeat" description="TPR 10">
    <location>
        <begin position="1276"/>
        <end position="1309"/>
    </location>
</feature>
<feature type="repeat" description="TPR 11">
    <location>
        <begin position="1345"/>
        <end position="1378"/>
    </location>
</feature>
<feature type="repeat" description="TPR 12">
    <location>
        <begin position="1411"/>
        <end position="1445"/>
    </location>
</feature>
<feature type="repeat" description="TPR 13">
    <location>
        <begin position="1447"/>
        <end position="1477"/>
    </location>
</feature>
<feature type="repeat" description="TPR 14">
    <location>
        <begin position="1574"/>
        <end position="1607"/>
    </location>
</feature>
<feature type="modified residue" description="N-acetylmethionine" evidence="1">
    <location>
        <position position="1"/>
    </location>
</feature>
<feature type="modified residue" description="Omega-N-methylarginine" evidence="11">
    <location>
        <position position="672"/>
    </location>
</feature>
<feature type="cross-link" description="Glycyl lysine isopeptide (Lys-Gly) (interchain with G-Cter in SUMO1)" evidence="1">
    <location>
        <position position="4"/>
    </location>
</feature>
<feature type="splice variant" id="VSP_032850" description="In isoform 2." evidence="8 9">
    <location>
        <begin position="1"/>
        <end position="1591"/>
    </location>
</feature>
<feature type="mutagenesis site" description="In wim; embryos arrest at 10.5-11.5 dpc and display an open neural tube in the head that lack the normal groove on the ventral midline. They lack ventral neural cell types and display other phenotypes characteristic of defects in Sonic hedgehog signaling." evidence="3">
    <original>L</original>
    <variation>P</variation>
    <location>
        <position position="1564"/>
    </location>
</feature>
<feature type="sequence conflict" description="In Ref. 3; AAH66096." evidence="10" ref="3">
    <original>T</original>
    <variation>I</variation>
    <location>
        <position position="949"/>
    </location>
</feature>
<feature type="sequence conflict" description="In Ref. 3; AAH51928." evidence="10" ref="3">
    <original>L</original>
    <variation>F</variation>
    <location>
        <position position="1506"/>
    </location>
</feature>
<feature type="sequence conflict" description="In Ref. 3; AAH66096." evidence="10" ref="3">
    <original>F</original>
    <variation>S</variation>
    <location>
        <position position="1511"/>
    </location>
</feature>
<dbReference type="EMBL" id="AY339616">
    <property type="protein sequence ID" value="AAR05390.1"/>
    <property type="molecule type" value="mRNA"/>
</dbReference>
<dbReference type="EMBL" id="AK006007">
    <property type="protein sequence ID" value="BAB24362.1"/>
    <property type="molecule type" value="mRNA"/>
</dbReference>
<dbReference type="EMBL" id="BC051928">
    <property type="protein sequence ID" value="AAH51928.1"/>
    <property type="molecule type" value="mRNA"/>
</dbReference>
<dbReference type="EMBL" id="BC060948">
    <property type="protein sequence ID" value="AAH60948.1"/>
    <property type="molecule type" value="mRNA"/>
</dbReference>
<dbReference type="EMBL" id="BC066096">
    <property type="protein sequence ID" value="AAH66096.1"/>
    <property type="molecule type" value="mRNA"/>
</dbReference>
<dbReference type="EMBL" id="AK122461">
    <property type="protein sequence ID" value="BAC65743.3"/>
    <property type="status" value="ALT_SEQ"/>
    <property type="molecule type" value="Transcribed_RNA"/>
</dbReference>
<dbReference type="CCDS" id="CCDS39054.1">
    <molecule id="Q6VH22-1"/>
</dbReference>
<dbReference type="RefSeq" id="NP_080574.5">
    <molecule id="Q6VH22-1"/>
    <property type="nucleotide sequence ID" value="NM_026298.5"/>
</dbReference>
<dbReference type="SMR" id="Q6VH22"/>
<dbReference type="BioGRID" id="212346">
    <property type="interactions" value="5"/>
</dbReference>
<dbReference type="ComplexPortal" id="CPX-5028">
    <property type="entry name" value="Intraflagellar transport complex B"/>
</dbReference>
<dbReference type="FunCoup" id="Q6VH22">
    <property type="interactions" value="586"/>
</dbReference>
<dbReference type="IntAct" id="Q6VH22">
    <property type="interactions" value="1"/>
</dbReference>
<dbReference type="MINT" id="Q6VH22"/>
<dbReference type="STRING" id="10090.ENSMUSP00000049335"/>
<dbReference type="iPTMnet" id="Q6VH22"/>
<dbReference type="PhosphoSitePlus" id="Q6VH22"/>
<dbReference type="SwissPalm" id="Q6VH22"/>
<dbReference type="PaxDb" id="10090-ENSMUSP00000049335"/>
<dbReference type="PeptideAtlas" id="Q6VH22"/>
<dbReference type="ProteomicsDB" id="267193">
    <molecule id="Q6VH22-1"/>
</dbReference>
<dbReference type="ProteomicsDB" id="267194">
    <molecule id="Q6VH22-2"/>
</dbReference>
<dbReference type="Pumba" id="Q6VH22"/>
<dbReference type="Antibodypedia" id="28528">
    <property type="antibodies" value="84 antibodies from 19 providers"/>
</dbReference>
<dbReference type="DNASU" id="67661"/>
<dbReference type="Ensembl" id="ENSMUST00000041565.11">
    <molecule id="Q6VH22-1"/>
    <property type="protein sequence ID" value="ENSMUSP00000049335.8"/>
    <property type="gene ID" value="ENSMUSG00000038564.12"/>
</dbReference>
<dbReference type="GeneID" id="67661"/>
<dbReference type="KEGG" id="mmu:67661"/>
<dbReference type="UCSC" id="uc008wya.1">
    <molecule id="Q6VH22-2"/>
    <property type="organism name" value="mouse"/>
</dbReference>
<dbReference type="UCSC" id="uc008wyb.1">
    <molecule id="Q6VH22-1"/>
    <property type="organism name" value="mouse"/>
</dbReference>
<dbReference type="AGR" id="MGI:2682064"/>
<dbReference type="CTD" id="26160"/>
<dbReference type="MGI" id="MGI:2682064">
    <property type="gene designation" value="Ift172"/>
</dbReference>
<dbReference type="VEuPathDB" id="HostDB:ENSMUSG00000038564"/>
<dbReference type="eggNOG" id="KOG3616">
    <property type="taxonomic scope" value="Eukaryota"/>
</dbReference>
<dbReference type="GeneTree" id="ENSGT00940000153417"/>
<dbReference type="HOGENOM" id="CLU_002716_0_0_1"/>
<dbReference type="InParanoid" id="Q6VH22"/>
<dbReference type="OMA" id="LKRTIWQ"/>
<dbReference type="OrthoDB" id="2186662at2759"/>
<dbReference type="PhylomeDB" id="Q6VH22"/>
<dbReference type="TreeFam" id="TF312901"/>
<dbReference type="Reactome" id="R-MMU-5610787">
    <property type="pathway name" value="Hedgehog 'off' state"/>
</dbReference>
<dbReference type="Reactome" id="R-MMU-5620924">
    <property type="pathway name" value="Intraflagellar transport"/>
</dbReference>
<dbReference type="BioGRID-ORCS" id="67661">
    <property type="hits" value="5 hits in 77 CRISPR screens"/>
</dbReference>
<dbReference type="ChiTaRS" id="Ift172">
    <property type="organism name" value="mouse"/>
</dbReference>
<dbReference type="PRO" id="PR:Q6VH22"/>
<dbReference type="Proteomes" id="UP000000589">
    <property type="component" value="Chromosome 5"/>
</dbReference>
<dbReference type="RNAct" id="Q6VH22">
    <property type="molecule type" value="protein"/>
</dbReference>
<dbReference type="Bgee" id="ENSMUSG00000038564">
    <property type="expression patterns" value="Expressed in seminiferous tubule of testis and 250 other cell types or tissues"/>
</dbReference>
<dbReference type="ExpressionAtlas" id="Q6VH22">
    <property type="expression patterns" value="baseline and differential"/>
</dbReference>
<dbReference type="GO" id="GO:0036064">
    <property type="term" value="C:ciliary basal body"/>
    <property type="evidence" value="ECO:0000266"/>
    <property type="project" value="MGI"/>
</dbReference>
<dbReference type="GO" id="GO:0005929">
    <property type="term" value="C:cilium"/>
    <property type="evidence" value="ECO:0000314"/>
    <property type="project" value="UniProtKB"/>
</dbReference>
<dbReference type="GO" id="GO:0030992">
    <property type="term" value="C:intraciliary transport particle B"/>
    <property type="evidence" value="ECO:0000314"/>
    <property type="project" value="UniProtKB"/>
</dbReference>
<dbReference type="GO" id="GO:0031514">
    <property type="term" value="C:motile cilium"/>
    <property type="evidence" value="ECO:0000266"/>
    <property type="project" value="MGI"/>
</dbReference>
<dbReference type="GO" id="GO:0097598">
    <property type="term" value="C:sperm cytoplasmic droplet"/>
    <property type="evidence" value="ECO:0000314"/>
    <property type="project" value="MGI"/>
</dbReference>
<dbReference type="GO" id="GO:0097225">
    <property type="term" value="C:sperm midpiece"/>
    <property type="evidence" value="ECO:0000314"/>
    <property type="project" value="MGI"/>
</dbReference>
<dbReference type="GO" id="GO:0097228">
    <property type="term" value="C:sperm principal piece"/>
    <property type="evidence" value="ECO:0000314"/>
    <property type="project" value="MGI"/>
</dbReference>
<dbReference type="GO" id="GO:0060348">
    <property type="term" value="P:bone development"/>
    <property type="evidence" value="ECO:0000315"/>
    <property type="project" value="MGI"/>
</dbReference>
<dbReference type="GO" id="GO:0007420">
    <property type="term" value="P:brain development"/>
    <property type="evidence" value="ECO:0000315"/>
    <property type="project" value="MGI"/>
</dbReference>
<dbReference type="GO" id="GO:0060271">
    <property type="term" value="P:cilium assembly"/>
    <property type="evidence" value="ECO:0000315"/>
    <property type="project" value="UniProtKB"/>
</dbReference>
<dbReference type="GO" id="GO:0031122">
    <property type="term" value="P:cytoplasmic microtubule organization"/>
    <property type="evidence" value="ECO:0000315"/>
    <property type="project" value="MGI"/>
</dbReference>
<dbReference type="GO" id="GO:0007368">
    <property type="term" value="P:determination of left/right symmetry"/>
    <property type="evidence" value="ECO:0000315"/>
    <property type="project" value="MGI"/>
</dbReference>
<dbReference type="GO" id="GO:0009953">
    <property type="term" value="P:dorsal/ventral pattern formation"/>
    <property type="evidence" value="ECO:0000315"/>
    <property type="project" value="MGI"/>
</dbReference>
<dbReference type="GO" id="GO:0048596">
    <property type="term" value="P:embryonic camera-type eye morphogenesis"/>
    <property type="evidence" value="ECO:0000315"/>
    <property type="project" value="MGI"/>
</dbReference>
<dbReference type="GO" id="GO:0008544">
    <property type="term" value="P:epidermis development"/>
    <property type="evidence" value="ECO:0000315"/>
    <property type="project" value="MGI"/>
</dbReference>
<dbReference type="GO" id="GO:0007507">
    <property type="term" value="P:heart development"/>
    <property type="evidence" value="ECO:0000315"/>
    <property type="project" value="MGI"/>
</dbReference>
<dbReference type="GO" id="GO:0001947">
    <property type="term" value="P:heart looping"/>
    <property type="evidence" value="ECO:0000315"/>
    <property type="project" value="MGI"/>
</dbReference>
<dbReference type="GO" id="GO:0061525">
    <property type="term" value="P:hindgut development"/>
    <property type="evidence" value="ECO:0000315"/>
    <property type="project" value="MGI"/>
</dbReference>
<dbReference type="GO" id="GO:0035720">
    <property type="term" value="P:intraciliary anterograde transport"/>
    <property type="evidence" value="ECO:0000303"/>
    <property type="project" value="ComplexPortal"/>
</dbReference>
<dbReference type="GO" id="GO:0043616">
    <property type="term" value="P:keratinocyte proliferation"/>
    <property type="evidence" value="ECO:0000315"/>
    <property type="project" value="MGI"/>
</dbReference>
<dbReference type="GO" id="GO:0070986">
    <property type="term" value="P:left/right axis specification"/>
    <property type="evidence" value="ECO:0000315"/>
    <property type="project" value="MGI"/>
</dbReference>
<dbReference type="GO" id="GO:0060173">
    <property type="term" value="P:limb development"/>
    <property type="evidence" value="ECO:0000315"/>
    <property type="project" value="MGI"/>
</dbReference>
<dbReference type="GO" id="GO:0050680">
    <property type="term" value="P:negative regulation of epithelial cell proliferation"/>
    <property type="evidence" value="ECO:0000315"/>
    <property type="project" value="MGI"/>
</dbReference>
<dbReference type="GO" id="GO:0010839">
    <property type="term" value="P:negative regulation of keratinocyte proliferation"/>
    <property type="evidence" value="ECO:0000315"/>
    <property type="project" value="MGI"/>
</dbReference>
<dbReference type="GO" id="GO:0045879">
    <property type="term" value="P:negative regulation of smoothened signaling pathway"/>
    <property type="evidence" value="ECO:0000315"/>
    <property type="project" value="MGI"/>
</dbReference>
<dbReference type="GO" id="GO:0001843">
    <property type="term" value="P:neural tube closure"/>
    <property type="evidence" value="ECO:0000315"/>
    <property type="project" value="MGI"/>
</dbReference>
<dbReference type="GO" id="GO:0021915">
    <property type="term" value="P:neural tube development"/>
    <property type="evidence" value="ECO:0000315"/>
    <property type="project" value="MGI"/>
</dbReference>
<dbReference type="GO" id="GO:0001841">
    <property type="term" value="P:neural tube formation"/>
    <property type="evidence" value="ECO:0000315"/>
    <property type="project" value="MGI"/>
</dbReference>
<dbReference type="GO" id="GO:1905515">
    <property type="term" value="P:non-motile cilium assembly"/>
    <property type="evidence" value="ECO:0000315"/>
    <property type="project" value="MGI"/>
</dbReference>
<dbReference type="GO" id="GO:0007219">
    <property type="term" value="P:Notch signaling pathway"/>
    <property type="evidence" value="ECO:0000315"/>
    <property type="project" value="MGI"/>
</dbReference>
<dbReference type="GO" id="GO:0045880">
    <property type="term" value="P:positive regulation of smoothened signaling pathway"/>
    <property type="evidence" value="ECO:0000315"/>
    <property type="project" value="MGI"/>
</dbReference>
<dbReference type="GO" id="GO:0016485">
    <property type="term" value="P:protein processing"/>
    <property type="evidence" value="ECO:0000315"/>
    <property type="project" value="MGI"/>
</dbReference>
<dbReference type="GO" id="GO:0008589">
    <property type="term" value="P:regulation of smoothened signaling pathway"/>
    <property type="evidence" value="ECO:0000315"/>
    <property type="project" value="MGI"/>
</dbReference>
<dbReference type="GO" id="GO:0060021">
    <property type="term" value="P:roof of mouth development"/>
    <property type="evidence" value="ECO:0000315"/>
    <property type="project" value="MGI"/>
</dbReference>
<dbReference type="GO" id="GO:0007224">
    <property type="term" value="P:smoothened signaling pathway"/>
    <property type="evidence" value="ECO:0000315"/>
    <property type="project" value="UniProtKB"/>
</dbReference>
<dbReference type="GO" id="GO:0021522">
    <property type="term" value="P:spinal cord motor neuron differentiation"/>
    <property type="evidence" value="ECO:0000315"/>
    <property type="project" value="MGI"/>
</dbReference>
<dbReference type="FunFam" id="1.25.40.470:FF:000008">
    <property type="entry name" value="Intraflagellar transport protein 172 homolog"/>
    <property type="match status" value="1"/>
</dbReference>
<dbReference type="FunFam" id="1.25.40.470:FF:000012">
    <property type="entry name" value="intraflagellar transport protein 172 homolog"/>
    <property type="match status" value="1"/>
</dbReference>
<dbReference type="FunFam" id="1.25.40.470:FF:000013">
    <property type="entry name" value="intraflagellar transport protein 172 homolog"/>
    <property type="match status" value="1"/>
</dbReference>
<dbReference type="FunFam" id="2.130.10.10:FF:000345">
    <property type="entry name" value="intraflagellar transport protein 172 homolog"/>
    <property type="match status" value="1"/>
</dbReference>
<dbReference type="FunFam" id="2.130.10.10:FF:000387">
    <property type="entry name" value="intraflagellar transport protein 172 homolog"/>
    <property type="match status" value="1"/>
</dbReference>
<dbReference type="Gene3D" id="1.25.40.470">
    <property type="match status" value="3"/>
</dbReference>
<dbReference type="Gene3D" id="2.130.10.10">
    <property type="entry name" value="YVTN repeat-like/Quinoprotein amine dehydrogenase"/>
    <property type="match status" value="2"/>
</dbReference>
<dbReference type="InterPro" id="IPR016024">
    <property type="entry name" value="ARM-type_fold"/>
</dbReference>
<dbReference type="InterPro" id="IPR056168">
    <property type="entry name" value="TPR_IF140/IFT172/WDR19"/>
</dbReference>
<dbReference type="InterPro" id="IPR056157">
    <property type="entry name" value="TPR_IFT80_172_dom"/>
</dbReference>
<dbReference type="InterPro" id="IPR015943">
    <property type="entry name" value="WD40/YVTN_repeat-like_dom_sf"/>
</dbReference>
<dbReference type="InterPro" id="IPR036322">
    <property type="entry name" value="WD40_repeat_dom_sf"/>
</dbReference>
<dbReference type="InterPro" id="IPR001680">
    <property type="entry name" value="WD40_rpt"/>
</dbReference>
<dbReference type="PANTHER" id="PTHR15722">
    <property type="entry name" value="IFT140/172-RELATED"/>
    <property type="match status" value="1"/>
</dbReference>
<dbReference type="PANTHER" id="PTHR15722:SF2">
    <property type="entry name" value="INTRAFLAGELLAR TRANSPORT PROTEIN 172 HOMOLOG"/>
    <property type="match status" value="1"/>
</dbReference>
<dbReference type="Pfam" id="PF24762">
    <property type="entry name" value="TPR_IF140-IFT172"/>
    <property type="match status" value="1"/>
</dbReference>
<dbReference type="Pfam" id="PF23387">
    <property type="entry name" value="TPR_IFT80_172"/>
    <property type="match status" value="1"/>
</dbReference>
<dbReference type="Pfam" id="PF00400">
    <property type="entry name" value="WD40"/>
    <property type="match status" value="1"/>
</dbReference>
<dbReference type="SMART" id="SM00320">
    <property type="entry name" value="WD40"/>
    <property type="match status" value="7"/>
</dbReference>
<dbReference type="SUPFAM" id="SSF48371">
    <property type="entry name" value="ARM repeat"/>
    <property type="match status" value="1"/>
</dbReference>
<dbReference type="SUPFAM" id="SSF69322">
    <property type="entry name" value="Tricorn protease domain 2"/>
    <property type="match status" value="1"/>
</dbReference>
<dbReference type="SUPFAM" id="SSF50978">
    <property type="entry name" value="WD40 repeat-like"/>
    <property type="match status" value="1"/>
</dbReference>
<name>IF172_MOUSE</name>
<reference key="1">
    <citation type="journal article" date="2003" name="Nature">
        <title>Hedgehog signalling in the mouse requires intraflagellar transport proteins.</title>
        <authorList>
            <person name="Huangfu D."/>
            <person name="Liu A."/>
            <person name="Rakeman A.S."/>
            <person name="Murcia N.S."/>
            <person name="Niswander L."/>
            <person name="Anderson K.V."/>
        </authorList>
    </citation>
    <scope>NUCLEOTIDE SEQUENCE [MRNA] (ISOFORM 1)</scope>
    <scope>FUNCTION</scope>
    <scope>MUTAGENESIS OF LEU-1564</scope>
    <source>
        <strain>C57BL/6J</strain>
    </source>
</reference>
<reference key="2">
    <citation type="journal article" date="2005" name="Science">
        <title>The transcriptional landscape of the mammalian genome.</title>
        <authorList>
            <person name="Carninci P."/>
            <person name="Kasukawa T."/>
            <person name="Katayama S."/>
            <person name="Gough J."/>
            <person name="Frith M.C."/>
            <person name="Maeda N."/>
            <person name="Oyama R."/>
            <person name="Ravasi T."/>
            <person name="Lenhard B."/>
            <person name="Wells C."/>
            <person name="Kodzius R."/>
            <person name="Shimokawa K."/>
            <person name="Bajic V.B."/>
            <person name="Brenner S.E."/>
            <person name="Batalov S."/>
            <person name="Forrest A.R."/>
            <person name="Zavolan M."/>
            <person name="Davis M.J."/>
            <person name="Wilming L.G."/>
            <person name="Aidinis V."/>
            <person name="Allen J.E."/>
            <person name="Ambesi-Impiombato A."/>
            <person name="Apweiler R."/>
            <person name="Aturaliya R.N."/>
            <person name="Bailey T.L."/>
            <person name="Bansal M."/>
            <person name="Baxter L."/>
            <person name="Beisel K.W."/>
            <person name="Bersano T."/>
            <person name="Bono H."/>
            <person name="Chalk A.M."/>
            <person name="Chiu K.P."/>
            <person name="Choudhary V."/>
            <person name="Christoffels A."/>
            <person name="Clutterbuck D.R."/>
            <person name="Crowe M.L."/>
            <person name="Dalla E."/>
            <person name="Dalrymple B.P."/>
            <person name="de Bono B."/>
            <person name="Della Gatta G."/>
            <person name="di Bernardo D."/>
            <person name="Down T."/>
            <person name="Engstrom P."/>
            <person name="Fagiolini M."/>
            <person name="Faulkner G."/>
            <person name="Fletcher C.F."/>
            <person name="Fukushima T."/>
            <person name="Furuno M."/>
            <person name="Futaki S."/>
            <person name="Gariboldi M."/>
            <person name="Georgii-Hemming P."/>
            <person name="Gingeras T.R."/>
            <person name="Gojobori T."/>
            <person name="Green R.E."/>
            <person name="Gustincich S."/>
            <person name="Harbers M."/>
            <person name="Hayashi Y."/>
            <person name="Hensch T.K."/>
            <person name="Hirokawa N."/>
            <person name="Hill D."/>
            <person name="Huminiecki L."/>
            <person name="Iacono M."/>
            <person name="Ikeo K."/>
            <person name="Iwama A."/>
            <person name="Ishikawa T."/>
            <person name="Jakt M."/>
            <person name="Kanapin A."/>
            <person name="Katoh M."/>
            <person name="Kawasawa Y."/>
            <person name="Kelso J."/>
            <person name="Kitamura H."/>
            <person name="Kitano H."/>
            <person name="Kollias G."/>
            <person name="Krishnan S.P."/>
            <person name="Kruger A."/>
            <person name="Kummerfeld S.K."/>
            <person name="Kurochkin I.V."/>
            <person name="Lareau L.F."/>
            <person name="Lazarevic D."/>
            <person name="Lipovich L."/>
            <person name="Liu J."/>
            <person name="Liuni S."/>
            <person name="McWilliam S."/>
            <person name="Madan Babu M."/>
            <person name="Madera M."/>
            <person name="Marchionni L."/>
            <person name="Matsuda H."/>
            <person name="Matsuzawa S."/>
            <person name="Miki H."/>
            <person name="Mignone F."/>
            <person name="Miyake S."/>
            <person name="Morris K."/>
            <person name="Mottagui-Tabar S."/>
            <person name="Mulder N."/>
            <person name="Nakano N."/>
            <person name="Nakauchi H."/>
            <person name="Ng P."/>
            <person name="Nilsson R."/>
            <person name="Nishiguchi S."/>
            <person name="Nishikawa S."/>
            <person name="Nori F."/>
            <person name="Ohara O."/>
            <person name="Okazaki Y."/>
            <person name="Orlando V."/>
            <person name="Pang K.C."/>
            <person name="Pavan W.J."/>
            <person name="Pavesi G."/>
            <person name="Pesole G."/>
            <person name="Petrovsky N."/>
            <person name="Piazza S."/>
            <person name="Reed J."/>
            <person name="Reid J.F."/>
            <person name="Ring B.Z."/>
            <person name="Ringwald M."/>
            <person name="Rost B."/>
            <person name="Ruan Y."/>
            <person name="Salzberg S.L."/>
            <person name="Sandelin A."/>
            <person name="Schneider C."/>
            <person name="Schoenbach C."/>
            <person name="Sekiguchi K."/>
            <person name="Semple C.A."/>
            <person name="Seno S."/>
            <person name="Sessa L."/>
            <person name="Sheng Y."/>
            <person name="Shibata Y."/>
            <person name="Shimada H."/>
            <person name="Shimada K."/>
            <person name="Silva D."/>
            <person name="Sinclair B."/>
            <person name="Sperling S."/>
            <person name="Stupka E."/>
            <person name="Sugiura K."/>
            <person name="Sultana R."/>
            <person name="Takenaka Y."/>
            <person name="Taki K."/>
            <person name="Tammoja K."/>
            <person name="Tan S.L."/>
            <person name="Tang S."/>
            <person name="Taylor M.S."/>
            <person name="Tegner J."/>
            <person name="Teichmann S.A."/>
            <person name="Ueda H.R."/>
            <person name="van Nimwegen E."/>
            <person name="Verardo R."/>
            <person name="Wei C.L."/>
            <person name="Yagi K."/>
            <person name="Yamanishi H."/>
            <person name="Zabarovsky E."/>
            <person name="Zhu S."/>
            <person name="Zimmer A."/>
            <person name="Hide W."/>
            <person name="Bult C."/>
            <person name="Grimmond S.M."/>
            <person name="Teasdale R.D."/>
            <person name="Liu E.T."/>
            <person name="Brusic V."/>
            <person name="Quackenbush J."/>
            <person name="Wahlestedt C."/>
            <person name="Mattick J.S."/>
            <person name="Hume D.A."/>
            <person name="Kai C."/>
            <person name="Sasaki D."/>
            <person name="Tomaru Y."/>
            <person name="Fukuda S."/>
            <person name="Kanamori-Katayama M."/>
            <person name="Suzuki M."/>
            <person name="Aoki J."/>
            <person name="Arakawa T."/>
            <person name="Iida J."/>
            <person name="Imamura K."/>
            <person name="Itoh M."/>
            <person name="Kato T."/>
            <person name="Kawaji H."/>
            <person name="Kawagashira N."/>
            <person name="Kawashima T."/>
            <person name="Kojima M."/>
            <person name="Kondo S."/>
            <person name="Konno H."/>
            <person name="Nakano K."/>
            <person name="Ninomiya N."/>
            <person name="Nishio T."/>
            <person name="Okada M."/>
            <person name="Plessy C."/>
            <person name="Shibata K."/>
            <person name="Shiraki T."/>
            <person name="Suzuki S."/>
            <person name="Tagami M."/>
            <person name="Waki K."/>
            <person name="Watahiki A."/>
            <person name="Okamura-Oho Y."/>
            <person name="Suzuki H."/>
            <person name="Kawai J."/>
            <person name="Hayashizaki Y."/>
        </authorList>
    </citation>
    <scope>NUCLEOTIDE SEQUENCE [LARGE SCALE MRNA] (ISOFORM 2)</scope>
    <source>
        <strain>C57BL/6J</strain>
        <tissue>Testis</tissue>
    </source>
</reference>
<reference key="3">
    <citation type="journal article" date="2004" name="Genome Res.">
        <title>The status, quality, and expansion of the NIH full-length cDNA project: the Mammalian Gene Collection (MGC).</title>
        <authorList>
            <consortium name="The MGC Project Team"/>
        </authorList>
    </citation>
    <scope>NUCLEOTIDE SEQUENCE [LARGE SCALE MRNA] (ISOFORMS 1 AND 2)</scope>
    <source>
        <strain>C57BL/6J</strain>
        <tissue>Brain</tissue>
        <tissue>Testis</tissue>
    </source>
</reference>
<reference key="4">
    <citation type="journal article" date="2003" name="DNA Res.">
        <title>Prediction of the coding sequences of mouse homologues of KIAA gene: II. The complete nucleotide sequences of 400 mouse KIAA-homologous cDNAs identified by screening of terminal sequences of cDNA clones randomly sampled from size-fractionated libraries.</title>
        <authorList>
            <person name="Okazaki N."/>
            <person name="Kikuno R."/>
            <person name="Ohara R."/>
            <person name="Inamoto S."/>
            <person name="Aizawa H."/>
            <person name="Yuasa S."/>
            <person name="Nakajima D."/>
            <person name="Nagase T."/>
            <person name="Ohara O."/>
            <person name="Koga H."/>
        </authorList>
    </citation>
    <scope>NUCLEOTIDE SEQUENCE [LARGE SCALE MRNA] OF 660-1749 (ISOFORM 1)</scope>
</reference>
<reference key="5">
    <citation type="journal article" date="2000" name="J. Cell Biol.">
        <title>Chlamydomonas IFT88 and its mouse homologue, polycystic kidney disease gene tg737, are required for assembly of cilia and flagella.</title>
        <authorList>
            <person name="Pazour G.J."/>
            <person name="Dickert B.L."/>
            <person name="Vucica Y."/>
            <person name="Seeley E.S."/>
            <person name="Rosenbaum J.L."/>
            <person name="Witman G.B."/>
            <person name="Cole D.G."/>
        </authorList>
    </citation>
    <scope>INTERACTION WITH IFT88</scope>
</reference>
<reference key="6">
    <citation type="journal article" date="2005" name="Proc. Natl. Acad. Sci. U.S.A.">
        <title>Cilia and Hedgehog responsiveness in the mouse.</title>
        <authorList>
            <person name="Huangfu D."/>
            <person name="Anderson K.V."/>
        </authorList>
    </citation>
    <scope>FUNCTION</scope>
</reference>
<reference key="7">
    <citation type="journal article" date="2010" name="Cell">
        <title>A tissue-specific atlas of mouse protein phosphorylation and expression.</title>
        <authorList>
            <person name="Huttlin E.L."/>
            <person name="Jedrychowski M.P."/>
            <person name="Elias J.E."/>
            <person name="Goswami T."/>
            <person name="Rad R."/>
            <person name="Beausoleil S.A."/>
            <person name="Villen J."/>
            <person name="Haas W."/>
            <person name="Sowa M.E."/>
            <person name="Gygi S.P."/>
        </authorList>
    </citation>
    <scope>IDENTIFICATION BY MASS SPECTROMETRY [LARGE SCALE ANALYSIS]</scope>
    <source>
        <tissue>Kidney</tissue>
        <tissue>Lung</tissue>
        <tissue>Testis</tissue>
    </source>
</reference>
<reference key="8">
    <citation type="journal article" date="2012" name="PLoS Genet.">
        <title>RAB-like 2 has an essential role in male fertility, sperm intra-flagellar transport, and tail assembly.</title>
        <authorList>
            <person name="Lo J.C."/>
            <person name="Jamsai D."/>
            <person name="O'Connor A.E."/>
            <person name="Borg C."/>
            <person name="Clark B.J."/>
            <person name="Whisstock J.C."/>
            <person name="Field M.C."/>
            <person name="Adams V."/>
            <person name="Ishikawa T."/>
            <person name="Aitken R.J."/>
            <person name="Whittle B."/>
            <person name="Goodnow C.C."/>
            <person name="Ormandy C.J."/>
            <person name="O'Bryan M.K."/>
        </authorList>
    </citation>
    <scope>INTERACTION WITH RABL2</scope>
    <scope>TISSUE SPECIFICITY</scope>
</reference>
<reference key="9">
    <citation type="journal article" date="2013" name="Exp. Cell Res.">
        <title>Interaction of mouse TTC30/DYF-1 with multiple intraflagellar transport complex B proteins and KIF17.</title>
        <authorList>
            <person name="Howard P.W."/>
            <person name="Jue S.F."/>
            <person name="Maurer R.A."/>
        </authorList>
    </citation>
    <scope>INTERACTION WITH IFT57</scope>
</reference>
<reference key="10">
    <citation type="journal article" date="2013" name="PLoS Genet.">
        <title>CRIS-a novel cAMP-binding protein controlling spermiogenesis and the development of flagellar bending.</title>
        <authorList>
            <person name="Kraehling A.M."/>
            <person name="Alvarez L."/>
            <person name="Debowski K."/>
            <person name="Van Q."/>
            <person name="Gunkel M."/>
            <person name="Irsen S."/>
            <person name="Al-Amoudi A."/>
            <person name="Struenker T."/>
            <person name="Kremmer E."/>
            <person name="Krause E."/>
            <person name="Voigt I."/>
            <person name="Woertge S."/>
            <person name="Waisman A."/>
            <person name="Weyand I."/>
            <person name="Seifert R."/>
            <person name="Kaupp U.B."/>
            <person name="Wachten D."/>
        </authorList>
    </citation>
    <scope>TISSUE SPECIFICITY</scope>
</reference>
<reference key="11">
    <citation type="journal article" date="2014" name="Mol. Cell. Proteomics">
        <title>Immunoaffinity enrichment and mass spectrometry analysis of protein methylation.</title>
        <authorList>
            <person name="Guo A."/>
            <person name="Gu H."/>
            <person name="Zhou J."/>
            <person name="Mulhern D."/>
            <person name="Wang Y."/>
            <person name="Lee K.A."/>
            <person name="Yang V."/>
            <person name="Aguiar M."/>
            <person name="Kornhauser J."/>
            <person name="Jia X."/>
            <person name="Ren J."/>
            <person name="Beausoleil S.A."/>
            <person name="Silva J.C."/>
            <person name="Vemulapalli V."/>
            <person name="Bedford M.T."/>
            <person name="Comb M.J."/>
        </authorList>
    </citation>
    <scope>METHYLATION [LARGE SCALE ANALYSIS] AT ARG-672</scope>
    <scope>IDENTIFICATION BY MASS SPECTROMETRY [LARGE SCALE ANALYSIS]</scope>
    <source>
        <tissue>Brain</tissue>
    </source>
</reference>
<protein>
    <recommendedName>
        <fullName>Intraflagellar transport protein 172 homolog</fullName>
    </recommendedName>
    <alternativeName>
        <fullName>Protein wimple</fullName>
    </alternativeName>
</protein>
<comment type="function">
    <text evidence="3 4">Required for the maintenance and formation of cilia. Plays an indirect role in hedgehog (Hh) signaling, cilia being required for all activity of the hedgehog pathway.</text>
</comment>
<comment type="subunit">
    <text evidence="2 5 6">Interacts with IFT88 (PubMed:11062270). Interacts with IFT57 (PubMed:23810713). Interacts with RABL2/RABL2A; binds preferentially to GDP-bound RABL2 (PubMed:23055941).</text>
</comment>
<comment type="subcellular location">
    <subcellularLocation>
        <location evidence="10">Cell projection</location>
        <location evidence="10">Cilium</location>
    </subcellularLocation>
</comment>
<comment type="alternative products">
    <event type="alternative splicing"/>
    <isoform>
        <id>Q6VH22-1</id>
        <name>1</name>
        <sequence type="displayed"/>
    </isoform>
    <isoform>
        <id>Q6VH22-2</id>
        <name>2</name>
        <sequence type="described" ref="VSP_032850"/>
    </isoform>
</comment>
<comment type="tissue specificity">
    <text evidence="5 7">Co-localizes with RABL2/RABL2A in the midpiece of elongated spermatids within the testis (at protein level). Expressed in the flagellum of elongated spermatids and sperm in the testis lumen (at protein level) (PubMed:24339785).</text>
</comment>
<comment type="similarity">
    <text evidence="10">Belongs to the IFT172 family.</text>
</comment>
<comment type="sequence caution" evidence="10">
    <conflict type="miscellaneous discrepancy">
        <sequence resource="EMBL-CDS" id="BAC65743"/>
    </conflict>
    <text>Intron retention. The sequence is a pre-RNA and intronic sequences remain.</text>
</comment>
<proteinExistence type="evidence at protein level"/>